<reference key="1">
    <citation type="journal article" date="2007" name="Nature">
        <title>Methane oxidation by an extremely acidophilic bacterium of the phylum Verrucomicrobia.</title>
        <authorList>
            <person name="Dunfield P.F."/>
            <person name="Yuryev A."/>
            <person name="Senin P."/>
            <person name="Smirnova A.V."/>
            <person name="Stott M.B."/>
            <person name="Hou S."/>
            <person name="Ly B."/>
            <person name="Saw J.H."/>
            <person name="Zhou Z."/>
            <person name="Ren Y."/>
            <person name="Wang J."/>
            <person name="Mountain B.W."/>
            <person name="Crowe M.A."/>
            <person name="Weatherby T.M."/>
            <person name="Bodelier P.L.E."/>
            <person name="Liesack W."/>
            <person name="Feng L."/>
            <person name="Wang L."/>
            <person name="Alam M."/>
        </authorList>
    </citation>
    <scope>NUCLEOTIDE SEQUENCE [GENOMIC DNA]</scope>
    <source>
        <strain>Isolate V4</strain>
    </source>
</reference>
<reference key="2">
    <citation type="journal article" date="2008" name="Biol. Direct">
        <title>Complete genome sequence of the extremely acidophilic methanotroph isolate V4, Methylacidiphilum infernorum, a representative of the bacterial phylum Verrucomicrobia.</title>
        <authorList>
            <person name="Hou S."/>
            <person name="Makarova K.S."/>
            <person name="Saw J.H."/>
            <person name="Senin P."/>
            <person name="Ly B.V."/>
            <person name="Zhou Z."/>
            <person name="Ren Y."/>
            <person name="Wang J."/>
            <person name="Galperin M.Y."/>
            <person name="Omelchenko M.V."/>
            <person name="Wolf Y.I."/>
            <person name="Yutin N."/>
            <person name="Koonin E.V."/>
            <person name="Stott M.B."/>
            <person name="Mountain B.W."/>
            <person name="Crowe M.A."/>
            <person name="Smirnova A.V."/>
            <person name="Dunfield P.F."/>
            <person name="Feng L."/>
            <person name="Wang L."/>
            <person name="Alam M."/>
        </authorList>
    </citation>
    <scope>NUCLEOTIDE SEQUENCE [LARGE SCALE GENOMIC DNA]</scope>
    <source>
        <strain>Isolate V4</strain>
    </source>
</reference>
<sequence length="476" mass="51800">MSAAAVILFPFIGILLLSQISSYRISSWLNTLFSFLSFVGSLFLLFKKDPPGSFFLVDELNIVFILLTNFIGFTTALFSQRYIAHEIEIGHLSPPSLRFYHSMYQALLFGMNLALCSNNIGLMWVSIEMATLSTVLMVGIYRTTESLEASWKYFILGGVGIALALFGTFLFYISARPTIGEGLAAMAWTNLFSHAAYLDSSLVNIGFIFILIGYGTKVGLFPLHGWLPDAHAEGPTPISAVLSGLLLNVALYAILRFKILLSANPHALQAGPLLTAMGLASVLFAALMFYKRRDIKRLFAYSSIEHMGIISFAFGIGGALANFAGLLHMSMHSLTKSAIFFAIGYISQIKRTQKIADLSGLTSSHPVLGWGLVFGVLAIAGLPPMGVFMSEFLVLSSAFARSPLLAACLAVGLITALGALILKLVQVSFGEPRGDSSPIRSLYLPMFSHFLLVFAAGVYIPPRVVEWFQHCSVLLK</sequence>
<protein>
    <recommendedName>
        <fullName>Hydrogenase-4 component F homolog</fullName>
        <ecNumber>1.-.-.-</ecNumber>
    </recommendedName>
</protein>
<feature type="chain" id="PRO_0000401185" description="Hydrogenase-4 component F homolog">
    <location>
        <begin position="1"/>
        <end position="476"/>
    </location>
</feature>
<feature type="transmembrane region" description="Helical" evidence="2">
    <location>
        <begin position="1"/>
        <end position="21"/>
    </location>
</feature>
<feature type="transmembrane region" description="Helical" evidence="2">
    <location>
        <begin position="25"/>
        <end position="45"/>
    </location>
</feature>
<feature type="transmembrane region" description="Helical" evidence="2">
    <location>
        <begin position="54"/>
        <end position="74"/>
    </location>
</feature>
<feature type="transmembrane region" description="Helical" evidence="2">
    <location>
        <begin position="120"/>
        <end position="140"/>
    </location>
</feature>
<feature type="transmembrane region" description="Helical" evidence="2">
    <location>
        <begin position="153"/>
        <end position="173"/>
    </location>
</feature>
<feature type="transmembrane region" description="Helical" evidence="2">
    <location>
        <begin position="202"/>
        <end position="222"/>
    </location>
</feature>
<feature type="transmembrane region" description="Helical" evidence="2">
    <location>
        <begin position="235"/>
        <end position="255"/>
    </location>
</feature>
<feature type="transmembrane region" description="Helical" evidence="2">
    <location>
        <begin position="270"/>
        <end position="290"/>
    </location>
</feature>
<feature type="transmembrane region" description="Helical" evidence="2">
    <location>
        <begin position="307"/>
        <end position="327"/>
    </location>
</feature>
<feature type="transmembrane region" description="Helical" evidence="2">
    <location>
        <begin position="368"/>
        <end position="388"/>
    </location>
</feature>
<feature type="transmembrane region" description="Helical" evidence="2">
    <location>
        <begin position="402"/>
        <end position="422"/>
    </location>
</feature>
<feature type="transmembrane region" description="Helical" evidence="2">
    <location>
        <begin position="442"/>
        <end position="462"/>
    </location>
</feature>
<comment type="subcellular location">
    <subcellularLocation>
        <location evidence="1">Cell inner membrane</location>
        <topology evidence="1">Multi-pass membrane protein</topology>
    </subcellularLocation>
</comment>
<comment type="similarity">
    <text evidence="3">Belongs to the complex I subunit 5 family.</text>
</comment>
<keyword id="KW-0997">Cell inner membrane</keyword>
<keyword id="KW-1003">Cell membrane</keyword>
<keyword id="KW-0472">Membrane</keyword>
<keyword id="KW-0560">Oxidoreductase</keyword>
<keyword id="KW-0812">Transmembrane</keyword>
<keyword id="KW-1133">Transmembrane helix</keyword>
<organism>
    <name type="scientific">Methylacidiphilum infernorum (isolate V4)</name>
    <name type="common">Methylokorus infernorum (strain V4)</name>
    <dbReference type="NCBI Taxonomy" id="481448"/>
    <lineage>
        <taxon>Bacteria</taxon>
        <taxon>Pseudomonadati</taxon>
        <taxon>Verrucomicrobiota</taxon>
        <taxon>Methylacidiphilae</taxon>
        <taxon>Methylacidiphilales</taxon>
        <taxon>Methylacidiphilaceae</taxon>
        <taxon>Methylacidiphilum (ex Ratnadevi et al. 2023)</taxon>
    </lineage>
</organism>
<dbReference type="EC" id="1.-.-.-"/>
<dbReference type="EMBL" id="EU223907">
    <property type="protein sequence ID" value="ABX56649.1"/>
    <property type="molecule type" value="Genomic_DNA"/>
</dbReference>
<dbReference type="EMBL" id="CP000975">
    <property type="protein sequence ID" value="ACD82571.1"/>
    <property type="molecule type" value="Genomic_DNA"/>
</dbReference>
<dbReference type="RefSeq" id="WP_012462853.1">
    <property type="nucleotide sequence ID" value="NC_010794.1"/>
</dbReference>
<dbReference type="SMR" id="A9QPJ1"/>
<dbReference type="STRING" id="481448.Minf_0513"/>
<dbReference type="KEGG" id="min:Minf_0513"/>
<dbReference type="eggNOG" id="COG0651">
    <property type="taxonomic scope" value="Bacteria"/>
</dbReference>
<dbReference type="HOGENOM" id="CLU_007100_10_1_0"/>
<dbReference type="OrthoDB" id="9807568at2"/>
<dbReference type="Proteomes" id="UP000009149">
    <property type="component" value="Chromosome"/>
</dbReference>
<dbReference type="GO" id="GO:0005886">
    <property type="term" value="C:plasma membrane"/>
    <property type="evidence" value="ECO:0007669"/>
    <property type="project" value="UniProtKB-SubCell"/>
</dbReference>
<dbReference type="GO" id="GO:0008137">
    <property type="term" value="F:NADH dehydrogenase (ubiquinone) activity"/>
    <property type="evidence" value="ECO:0007669"/>
    <property type="project" value="InterPro"/>
</dbReference>
<dbReference type="GO" id="GO:0042773">
    <property type="term" value="P:ATP synthesis coupled electron transport"/>
    <property type="evidence" value="ECO:0007669"/>
    <property type="project" value="InterPro"/>
</dbReference>
<dbReference type="InterPro" id="IPR052175">
    <property type="entry name" value="ComplexI-like_HydComp"/>
</dbReference>
<dbReference type="InterPro" id="IPR003918">
    <property type="entry name" value="NADH_UbQ_OxRdtase"/>
</dbReference>
<dbReference type="InterPro" id="IPR001750">
    <property type="entry name" value="ND/Mrp_TM"/>
</dbReference>
<dbReference type="NCBIfam" id="NF005043">
    <property type="entry name" value="PRK06458.1-3"/>
    <property type="match status" value="1"/>
</dbReference>
<dbReference type="NCBIfam" id="NF005045">
    <property type="entry name" value="PRK06458.1-5"/>
    <property type="match status" value="1"/>
</dbReference>
<dbReference type="PANTHER" id="PTHR42682">
    <property type="entry name" value="HYDROGENASE-4 COMPONENT F"/>
    <property type="match status" value="1"/>
</dbReference>
<dbReference type="PANTHER" id="PTHR42682:SF5">
    <property type="entry name" value="HYDROGENASE-4 COMPONENT F"/>
    <property type="match status" value="1"/>
</dbReference>
<dbReference type="Pfam" id="PF00361">
    <property type="entry name" value="Proton_antipo_M"/>
    <property type="match status" value="1"/>
</dbReference>
<dbReference type="PRINTS" id="PR01437">
    <property type="entry name" value="NUOXDRDTASE4"/>
</dbReference>
<accession>A9QPJ1</accession>
<gene>
    <name type="primary">hyfF</name>
    <name type="synonym">hyfB</name>
    <name type="ordered locus">Minf_0513</name>
</gene>
<proteinExistence type="inferred from homology"/>
<evidence type="ECO:0000250" key="1"/>
<evidence type="ECO:0000255" key="2"/>
<evidence type="ECO:0000305" key="3"/>
<name>HYFF_METI4</name>